<gene>
    <name evidence="2" type="primary">trmB</name>
    <name type="ordered locus">BUAPTUC7_545</name>
</gene>
<sequence>MKNNIITPRYNLEGVFLRQIHSFVCRKGRTTTSQLSAIKKYWSLIGVDFQLNALNFSSIFKHRAPIILEIGFGSGESLVKTAMNFPDKNFLGIEVYKSGIGSCLHYASSYQIQNLRIIYYDATEVMYNMIPDDTLSKVQIFFPDPWHKKRHHKRRLLKNIFLKIITKKLIIDGILHIATDSESYAFYILDEIKDIKNYKNLSEKNNFVKRPVSRIITKFEKKGLLQGKKIFDLMFQLKK</sequence>
<name>TRMB_BUCAT</name>
<keyword id="KW-0489">Methyltransferase</keyword>
<keyword id="KW-0949">S-adenosyl-L-methionine</keyword>
<keyword id="KW-0808">Transferase</keyword>
<keyword id="KW-0819">tRNA processing</keyword>
<organism>
    <name type="scientific">Buchnera aphidicola subsp. Acyrthosiphon pisum (strain Tuc7)</name>
    <dbReference type="NCBI Taxonomy" id="561501"/>
    <lineage>
        <taxon>Bacteria</taxon>
        <taxon>Pseudomonadati</taxon>
        <taxon>Pseudomonadota</taxon>
        <taxon>Gammaproteobacteria</taxon>
        <taxon>Enterobacterales</taxon>
        <taxon>Erwiniaceae</taxon>
        <taxon>Buchnera</taxon>
    </lineage>
</organism>
<comment type="function">
    <text evidence="2">Catalyzes the formation of N(7)-methylguanine at position 46 (m7G46) in tRNA.</text>
</comment>
<comment type="catalytic activity">
    <reaction evidence="2">
        <text>guanosine(46) in tRNA + S-adenosyl-L-methionine = N(7)-methylguanosine(46) in tRNA + S-adenosyl-L-homocysteine</text>
        <dbReference type="Rhea" id="RHEA:42708"/>
        <dbReference type="Rhea" id="RHEA-COMP:10188"/>
        <dbReference type="Rhea" id="RHEA-COMP:10189"/>
        <dbReference type="ChEBI" id="CHEBI:57856"/>
        <dbReference type="ChEBI" id="CHEBI:59789"/>
        <dbReference type="ChEBI" id="CHEBI:74269"/>
        <dbReference type="ChEBI" id="CHEBI:74480"/>
        <dbReference type="EC" id="2.1.1.33"/>
    </reaction>
</comment>
<comment type="pathway">
    <text evidence="2">tRNA modification; N(7)-methylguanine-tRNA biosynthesis.</text>
</comment>
<comment type="subunit">
    <text evidence="2">Monomer.</text>
</comment>
<comment type="similarity">
    <text evidence="2">Belongs to the class I-like SAM-binding methyltransferase superfamily. TrmB family.</text>
</comment>
<feature type="chain" id="PRO_1000149649" description="tRNA (guanine-N(7)-)-methyltransferase">
    <location>
        <begin position="1"/>
        <end position="239"/>
    </location>
</feature>
<feature type="active site" evidence="1">
    <location>
        <position position="144"/>
    </location>
</feature>
<feature type="binding site" evidence="2">
    <location>
        <position position="69"/>
    </location>
    <ligand>
        <name>S-adenosyl-L-methionine</name>
        <dbReference type="ChEBI" id="CHEBI:59789"/>
    </ligand>
</feature>
<feature type="binding site" evidence="2">
    <location>
        <position position="94"/>
    </location>
    <ligand>
        <name>S-adenosyl-L-methionine</name>
        <dbReference type="ChEBI" id="CHEBI:59789"/>
    </ligand>
</feature>
<feature type="binding site" evidence="2">
    <location>
        <position position="121"/>
    </location>
    <ligand>
        <name>S-adenosyl-L-methionine</name>
        <dbReference type="ChEBI" id="CHEBI:59789"/>
    </ligand>
</feature>
<feature type="binding site" evidence="2">
    <location>
        <position position="144"/>
    </location>
    <ligand>
        <name>S-adenosyl-L-methionine</name>
        <dbReference type="ChEBI" id="CHEBI:59789"/>
    </ligand>
</feature>
<feature type="binding site" evidence="2">
    <location>
        <position position="148"/>
    </location>
    <ligand>
        <name>substrate</name>
    </ligand>
</feature>
<feature type="binding site" evidence="2">
    <location>
        <position position="180"/>
    </location>
    <ligand>
        <name>substrate</name>
    </ligand>
</feature>
<feature type="binding site" evidence="2">
    <location>
        <begin position="217"/>
        <end position="220"/>
    </location>
    <ligand>
        <name>substrate</name>
    </ligand>
</feature>
<proteinExistence type="inferred from homology"/>
<evidence type="ECO:0000250" key="1"/>
<evidence type="ECO:0000255" key="2">
    <source>
        <dbReference type="HAMAP-Rule" id="MF_01057"/>
    </source>
</evidence>
<dbReference type="EC" id="2.1.1.33" evidence="2"/>
<dbReference type="EMBL" id="CP001158">
    <property type="protein sequence ID" value="ACL30340.1"/>
    <property type="molecule type" value="Genomic_DNA"/>
</dbReference>
<dbReference type="RefSeq" id="WP_012619580.1">
    <property type="nucleotide sequence ID" value="NC_011834.1"/>
</dbReference>
<dbReference type="SMR" id="B8D875"/>
<dbReference type="KEGG" id="bau:BUAPTUC7_545"/>
<dbReference type="HOGENOM" id="CLU_050910_0_1_6"/>
<dbReference type="UniPathway" id="UPA00989"/>
<dbReference type="GO" id="GO:0043527">
    <property type="term" value="C:tRNA methyltransferase complex"/>
    <property type="evidence" value="ECO:0007669"/>
    <property type="project" value="TreeGrafter"/>
</dbReference>
<dbReference type="GO" id="GO:0008176">
    <property type="term" value="F:tRNA (guanine(46)-N7)-methyltransferase activity"/>
    <property type="evidence" value="ECO:0007669"/>
    <property type="project" value="UniProtKB-UniRule"/>
</dbReference>
<dbReference type="Gene3D" id="3.40.50.150">
    <property type="entry name" value="Vaccinia Virus protein VP39"/>
    <property type="match status" value="1"/>
</dbReference>
<dbReference type="HAMAP" id="MF_01057">
    <property type="entry name" value="tRNA_methyltr_TrmB"/>
    <property type="match status" value="1"/>
</dbReference>
<dbReference type="InterPro" id="IPR029063">
    <property type="entry name" value="SAM-dependent_MTases_sf"/>
</dbReference>
<dbReference type="InterPro" id="IPR003358">
    <property type="entry name" value="tRNA_(Gua-N-7)_MeTrfase_Trmb"/>
</dbReference>
<dbReference type="InterPro" id="IPR055361">
    <property type="entry name" value="tRNA_methyltr_TrmB_bact"/>
</dbReference>
<dbReference type="NCBIfam" id="TIGR00091">
    <property type="entry name" value="tRNA (guanosine(46)-N7)-methyltransferase TrmB"/>
    <property type="match status" value="1"/>
</dbReference>
<dbReference type="PANTHER" id="PTHR23417">
    <property type="entry name" value="3-DEOXY-D-MANNO-OCTULOSONIC-ACID TRANSFERASE/TRNA GUANINE-N 7 - -METHYLTRANSFERASE"/>
    <property type="match status" value="1"/>
</dbReference>
<dbReference type="PANTHER" id="PTHR23417:SF14">
    <property type="entry name" value="PENTACOTRIPEPTIDE-REPEAT REGION OF PRORP DOMAIN-CONTAINING PROTEIN"/>
    <property type="match status" value="1"/>
</dbReference>
<dbReference type="Pfam" id="PF02390">
    <property type="entry name" value="Methyltransf_4"/>
    <property type="match status" value="1"/>
</dbReference>
<dbReference type="SUPFAM" id="SSF53335">
    <property type="entry name" value="S-adenosyl-L-methionine-dependent methyltransferases"/>
    <property type="match status" value="1"/>
</dbReference>
<dbReference type="PROSITE" id="PS51625">
    <property type="entry name" value="SAM_MT_TRMB"/>
    <property type="match status" value="1"/>
</dbReference>
<accession>B8D875</accession>
<reference key="1">
    <citation type="journal article" date="2009" name="Science">
        <title>The dynamics and time scale of ongoing genomic erosion in symbiotic bacteria.</title>
        <authorList>
            <person name="Moran N.A."/>
            <person name="McLaughlin H.J."/>
            <person name="Sorek R."/>
        </authorList>
    </citation>
    <scope>NUCLEOTIDE SEQUENCE [LARGE SCALE GENOMIC DNA]</scope>
    <source>
        <strain>Tuc7</strain>
    </source>
</reference>
<protein>
    <recommendedName>
        <fullName evidence="2">tRNA (guanine-N(7)-)-methyltransferase</fullName>
        <ecNumber evidence="2">2.1.1.33</ecNumber>
    </recommendedName>
    <alternativeName>
        <fullName evidence="2">tRNA (guanine(46)-N(7))-methyltransferase</fullName>
    </alternativeName>
    <alternativeName>
        <fullName evidence="2">tRNA(m7G46)-methyltransferase</fullName>
    </alternativeName>
</protein>